<comment type="function">
    <text evidence="1">Catalyzes the NADPH-dependent rearrangement and reduction of 1-deoxy-D-xylulose-5-phosphate (DXP) to 2-C-methyl-D-erythritol 4-phosphate (MEP).</text>
</comment>
<comment type="catalytic activity">
    <reaction evidence="1">
        <text>2-C-methyl-D-erythritol 4-phosphate + NADP(+) = 1-deoxy-D-xylulose 5-phosphate + NADPH + H(+)</text>
        <dbReference type="Rhea" id="RHEA:13717"/>
        <dbReference type="ChEBI" id="CHEBI:15378"/>
        <dbReference type="ChEBI" id="CHEBI:57783"/>
        <dbReference type="ChEBI" id="CHEBI:57792"/>
        <dbReference type="ChEBI" id="CHEBI:58262"/>
        <dbReference type="ChEBI" id="CHEBI:58349"/>
        <dbReference type="EC" id="1.1.1.267"/>
    </reaction>
    <physiologicalReaction direction="right-to-left" evidence="1">
        <dbReference type="Rhea" id="RHEA:13719"/>
    </physiologicalReaction>
</comment>
<comment type="cofactor">
    <cofactor evidence="1">
        <name>Mg(2+)</name>
        <dbReference type="ChEBI" id="CHEBI:18420"/>
    </cofactor>
    <cofactor evidence="1">
        <name>Mn(2+)</name>
        <dbReference type="ChEBI" id="CHEBI:29035"/>
    </cofactor>
</comment>
<comment type="pathway">
    <text evidence="1">Isoprenoid biosynthesis; isopentenyl diphosphate biosynthesis via DXP pathway; isopentenyl diphosphate from 1-deoxy-D-xylulose 5-phosphate: step 1/6.</text>
</comment>
<comment type="similarity">
    <text evidence="1">Belongs to the DXR family.</text>
</comment>
<evidence type="ECO:0000255" key="1">
    <source>
        <dbReference type="HAMAP-Rule" id="MF_00183"/>
    </source>
</evidence>
<dbReference type="EC" id="1.1.1.267" evidence="1"/>
<dbReference type="EMBL" id="CP001173">
    <property type="protein sequence ID" value="ACI26965.1"/>
    <property type="molecule type" value="Genomic_DNA"/>
</dbReference>
<dbReference type="RefSeq" id="WP_000260772.1">
    <property type="nucleotide sequence ID" value="NC_011333.1"/>
</dbReference>
<dbReference type="SMR" id="B5Z9Y5"/>
<dbReference type="KEGG" id="hpg:HPG27_198"/>
<dbReference type="HOGENOM" id="CLU_035714_4_0_7"/>
<dbReference type="UniPathway" id="UPA00056">
    <property type="reaction ID" value="UER00092"/>
</dbReference>
<dbReference type="Proteomes" id="UP000001735">
    <property type="component" value="Chromosome"/>
</dbReference>
<dbReference type="GO" id="GO:0030604">
    <property type="term" value="F:1-deoxy-D-xylulose-5-phosphate reductoisomerase activity"/>
    <property type="evidence" value="ECO:0007669"/>
    <property type="project" value="UniProtKB-UniRule"/>
</dbReference>
<dbReference type="GO" id="GO:0030145">
    <property type="term" value="F:manganese ion binding"/>
    <property type="evidence" value="ECO:0007669"/>
    <property type="project" value="TreeGrafter"/>
</dbReference>
<dbReference type="GO" id="GO:0070402">
    <property type="term" value="F:NADPH binding"/>
    <property type="evidence" value="ECO:0007669"/>
    <property type="project" value="InterPro"/>
</dbReference>
<dbReference type="GO" id="GO:0051484">
    <property type="term" value="P:isopentenyl diphosphate biosynthetic process, methylerythritol 4-phosphate pathway involved in terpenoid biosynthetic process"/>
    <property type="evidence" value="ECO:0007669"/>
    <property type="project" value="TreeGrafter"/>
</dbReference>
<dbReference type="FunFam" id="3.40.50.720:FF:000771">
    <property type="entry name" value="1-deoxy-D-xylulose 5-phosphate reductoisomerase"/>
    <property type="match status" value="1"/>
</dbReference>
<dbReference type="Gene3D" id="1.10.1740.10">
    <property type="match status" value="1"/>
</dbReference>
<dbReference type="Gene3D" id="3.40.50.720">
    <property type="entry name" value="NAD(P)-binding Rossmann-like Domain"/>
    <property type="match status" value="1"/>
</dbReference>
<dbReference type="HAMAP" id="MF_00183">
    <property type="entry name" value="DXP_reductoisom"/>
    <property type="match status" value="1"/>
</dbReference>
<dbReference type="InterPro" id="IPR003821">
    <property type="entry name" value="DXP_reductoisomerase"/>
</dbReference>
<dbReference type="InterPro" id="IPR013644">
    <property type="entry name" value="DXP_reductoisomerase_C"/>
</dbReference>
<dbReference type="InterPro" id="IPR013512">
    <property type="entry name" value="DXP_reductoisomerase_N"/>
</dbReference>
<dbReference type="InterPro" id="IPR026877">
    <property type="entry name" value="DXPR_C"/>
</dbReference>
<dbReference type="InterPro" id="IPR036169">
    <property type="entry name" value="DXPR_C_sf"/>
</dbReference>
<dbReference type="InterPro" id="IPR036291">
    <property type="entry name" value="NAD(P)-bd_dom_sf"/>
</dbReference>
<dbReference type="NCBIfam" id="TIGR00243">
    <property type="entry name" value="Dxr"/>
    <property type="match status" value="1"/>
</dbReference>
<dbReference type="PANTHER" id="PTHR30525">
    <property type="entry name" value="1-DEOXY-D-XYLULOSE 5-PHOSPHATE REDUCTOISOMERASE"/>
    <property type="match status" value="1"/>
</dbReference>
<dbReference type="PANTHER" id="PTHR30525:SF0">
    <property type="entry name" value="1-DEOXY-D-XYLULOSE 5-PHOSPHATE REDUCTOISOMERASE, CHLOROPLASTIC"/>
    <property type="match status" value="1"/>
</dbReference>
<dbReference type="Pfam" id="PF08436">
    <property type="entry name" value="DXP_redisom_C"/>
    <property type="match status" value="1"/>
</dbReference>
<dbReference type="Pfam" id="PF02670">
    <property type="entry name" value="DXP_reductoisom"/>
    <property type="match status" value="1"/>
</dbReference>
<dbReference type="Pfam" id="PF13288">
    <property type="entry name" value="DXPR_C"/>
    <property type="match status" value="1"/>
</dbReference>
<dbReference type="PIRSF" id="PIRSF006205">
    <property type="entry name" value="Dxp_reductismrs"/>
    <property type="match status" value="1"/>
</dbReference>
<dbReference type="SUPFAM" id="SSF69055">
    <property type="entry name" value="1-deoxy-D-xylulose-5-phosphate reductoisomerase, C-terminal domain"/>
    <property type="match status" value="1"/>
</dbReference>
<dbReference type="SUPFAM" id="SSF55347">
    <property type="entry name" value="Glyceraldehyde-3-phosphate dehydrogenase-like, C-terminal domain"/>
    <property type="match status" value="1"/>
</dbReference>
<dbReference type="SUPFAM" id="SSF51735">
    <property type="entry name" value="NAD(P)-binding Rossmann-fold domains"/>
    <property type="match status" value="1"/>
</dbReference>
<organism>
    <name type="scientific">Helicobacter pylori (strain G27)</name>
    <dbReference type="NCBI Taxonomy" id="563041"/>
    <lineage>
        <taxon>Bacteria</taxon>
        <taxon>Pseudomonadati</taxon>
        <taxon>Campylobacterota</taxon>
        <taxon>Epsilonproteobacteria</taxon>
        <taxon>Campylobacterales</taxon>
        <taxon>Helicobacteraceae</taxon>
        <taxon>Helicobacter</taxon>
    </lineage>
</organism>
<accession>B5Z9Y5</accession>
<gene>
    <name evidence="1" type="primary">dxr</name>
    <name type="ordered locus">HPG27_198</name>
</gene>
<proteinExistence type="inferred from homology"/>
<name>DXR_HELPG</name>
<protein>
    <recommendedName>
        <fullName evidence="1">1-deoxy-D-xylulose 5-phosphate reductoisomerase</fullName>
        <shortName evidence="1">DXP reductoisomerase</shortName>
        <ecNumber evidence="1">1.1.1.267</ecNumber>
    </recommendedName>
    <alternativeName>
        <fullName evidence="1">1-deoxyxylulose-5-phosphate reductoisomerase</fullName>
    </alternativeName>
    <alternativeName>
        <fullName evidence="1">2-C-methyl-D-erythritol 4-phosphate synthase</fullName>
    </alternativeName>
</protein>
<feature type="chain" id="PRO_1000098501" description="1-deoxy-D-xylulose 5-phosphate reductoisomerase">
    <location>
        <begin position="1"/>
        <end position="366"/>
    </location>
</feature>
<feature type="binding site" evidence="1">
    <location>
        <position position="7"/>
    </location>
    <ligand>
        <name>NADPH</name>
        <dbReference type="ChEBI" id="CHEBI:57783"/>
    </ligand>
</feature>
<feature type="binding site" evidence="1">
    <location>
        <position position="8"/>
    </location>
    <ligand>
        <name>NADPH</name>
        <dbReference type="ChEBI" id="CHEBI:57783"/>
    </ligand>
</feature>
<feature type="binding site" evidence="1">
    <location>
        <position position="9"/>
    </location>
    <ligand>
        <name>NADPH</name>
        <dbReference type="ChEBI" id="CHEBI:57783"/>
    </ligand>
</feature>
<feature type="binding site" evidence="1">
    <location>
        <position position="10"/>
    </location>
    <ligand>
        <name>NADPH</name>
        <dbReference type="ChEBI" id="CHEBI:57783"/>
    </ligand>
</feature>
<feature type="binding site" evidence="1">
    <location>
        <position position="31"/>
    </location>
    <ligand>
        <name>NADPH</name>
        <dbReference type="ChEBI" id="CHEBI:57783"/>
    </ligand>
</feature>
<feature type="binding site" evidence="1">
    <location>
        <position position="32"/>
    </location>
    <ligand>
        <name>NADPH</name>
        <dbReference type="ChEBI" id="CHEBI:57783"/>
    </ligand>
</feature>
<feature type="binding site" evidence="1">
    <location>
        <position position="33"/>
    </location>
    <ligand>
        <name>NADPH</name>
        <dbReference type="ChEBI" id="CHEBI:57783"/>
    </ligand>
</feature>
<feature type="binding site" evidence="1">
    <location>
        <position position="113"/>
    </location>
    <ligand>
        <name>NADPH</name>
        <dbReference type="ChEBI" id="CHEBI:57783"/>
    </ligand>
</feature>
<feature type="binding site" evidence="1">
    <location>
        <position position="114"/>
    </location>
    <ligand>
        <name>1-deoxy-D-xylulose 5-phosphate</name>
        <dbReference type="ChEBI" id="CHEBI:57792"/>
    </ligand>
</feature>
<feature type="binding site" evidence="1">
    <location>
        <position position="115"/>
    </location>
    <ligand>
        <name>NADPH</name>
        <dbReference type="ChEBI" id="CHEBI:57783"/>
    </ligand>
</feature>
<feature type="binding site" evidence="1">
    <location>
        <position position="133"/>
    </location>
    <ligand>
        <name>Mn(2+)</name>
        <dbReference type="ChEBI" id="CHEBI:29035"/>
    </ligand>
</feature>
<feature type="binding site" evidence="1">
    <location>
        <position position="134"/>
    </location>
    <ligand>
        <name>1-deoxy-D-xylulose 5-phosphate</name>
        <dbReference type="ChEBI" id="CHEBI:57792"/>
    </ligand>
</feature>
<feature type="binding site" evidence="1">
    <location>
        <position position="135"/>
    </location>
    <ligand>
        <name>1-deoxy-D-xylulose 5-phosphate</name>
        <dbReference type="ChEBI" id="CHEBI:57792"/>
    </ligand>
</feature>
<feature type="binding site" evidence="1">
    <location>
        <position position="135"/>
    </location>
    <ligand>
        <name>Mn(2+)</name>
        <dbReference type="ChEBI" id="CHEBI:29035"/>
    </ligand>
</feature>
<feature type="binding site" evidence="1">
    <location>
        <position position="158"/>
    </location>
    <ligand>
        <name>1-deoxy-D-xylulose 5-phosphate</name>
        <dbReference type="ChEBI" id="CHEBI:57792"/>
    </ligand>
</feature>
<feature type="binding site" evidence="1">
    <location>
        <position position="181"/>
    </location>
    <ligand>
        <name>1-deoxy-D-xylulose 5-phosphate</name>
        <dbReference type="ChEBI" id="CHEBI:57792"/>
    </ligand>
</feature>
<feature type="binding site" evidence="1">
    <location>
        <position position="187"/>
    </location>
    <ligand>
        <name>NADPH</name>
        <dbReference type="ChEBI" id="CHEBI:57783"/>
    </ligand>
</feature>
<feature type="binding site" evidence="1">
    <location>
        <position position="194"/>
    </location>
    <ligand>
        <name>1-deoxy-D-xylulose 5-phosphate</name>
        <dbReference type="ChEBI" id="CHEBI:57792"/>
    </ligand>
</feature>
<feature type="binding site" evidence="1">
    <location>
        <position position="199"/>
    </location>
    <ligand>
        <name>1-deoxy-D-xylulose 5-phosphate</name>
        <dbReference type="ChEBI" id="CHEBI:57792"/>
    </ligand>
</feature>
<feature type="binding site" evidence="1">
    <location>
        <position position="200"/>
    </location>
    <ligand>
        <name>1-deoxy-D-xylulose 5-phosphate</name>
        <dbReference type="ChEBI" id="CHEBI:57792"/>
    </ligand>
</feature>
<feature type="binding site" evidence="1">
    <location>
        <position position="203"/>
    </location>
    <ligand>
        <name>1-deoxy-D-xylulose 5-phosphate</name>
        <dbReference type="ChEBI" id="CHEBI:57792"/>
    </ligand>
</feature>
<feature type="binding site" evidence="1">
    <location>
        <position position="203"/>
    </location>
    <ligand>
        <name>Mn(2+)</name>
        <dbReference type="ChEBI" id="CHEBI:29035"/>
    </ligand>
</feature>
<keyword id="KW-0414">Isoprene biosynthesis</keyword>
<keyword id="KW-0464">Manganese</keyword>
<keyword id="KW-0479">Metal-binding</keyword>
<keyword id="KW-0521">NADP</keyword>
<keyword id="KW-0560">Oxidoreductase</keyword>
<keyword id="KW-1185">Reference proteome</keyword>
<sequence length="366" mass="40299">MVVLGSTGSIGKNALKIAKKFGVEIEALSCGKNIALINEQIQVFKPKKVAVLDPNDLNNLEPLGAEVFVGLEGIDAMIEECASNLVLNAIVGVAGLRASFKSLQRNKKLALANKESLVSAGHLLDISQITPIDSEHFGLWALLQNKTLKPKSLIISASGGAFRDTPLELIAIQNAQNALKHPNWSMGSKITIDSASMVNKLFEILETYWLFGASLKIDALIERSSIVHALVEFEDNSVIAHLASADMKLPISYAINPKLASLNASIKPLDLYALSAIKFEPISMERYTLWRYKDLLLENPKLGVVLNASNEVAMKKFLNQEIAFGGFIQIISQALELYAKKSFKFSTLDEVLELDKEVRDRFKNYR</sequence>
<reference key="1">
    <citation type="journal article" date="2009" name="J. Bacteriol.">
        <title>The complete genome sequence of Helicobacter pylori strain G27.</title>
        <authorList>
            <person name="Baltrus D.A."/>
            <person name="Amieva M.R."/>
            <person name="Covacci A."/>
            <person name="Lowe T.M."/>
            <person name="Merrell D.S."/>
            <person name="Ottemann K.M."/>
            <person name="Stein M."/>
            <person name="Salama N.R."/>
            <person name="Guillemin K."/>
        </authorList>
    </citation>
    <scope>NUCLEOTIDE SEQUENCE [LARGE SCALE GENOMIC DNA]</scope>
    <source>
        <strain>G27</strain>
    </source>
</reference>